<protein>
    <recommendedName>
        <fullName>Cytochrome b</fullName>
    </recommendedName>
    <alternativeName>
        <fullName>Complex III subunit 3</fullName>
    </alternativeName>
    <alternativeName>
        <fullName>Complex III subunit III</fullName>
    </alternativeName>
    <alternativeName>
        <fullName>Cytochrome b-c1 complex subunit 3</fullName>
    </alternativeName>
    <alternativeName>
        <fullName>Ubiquinol-cytochrome-c reductase complex cytochrome b subunit</fullName>
    </alternativeName>
</protein>
<geneLocation type="mitochondrion"/>
<reference key="1">
    <citation type="journal article" date="1999" name="Cladistics">
        <title>Molecular phylogeny and biogeography of Madagascar's native rodents (Muridae: Nesomyinae): a test of the single origin hypothesis.</title>
        <authorList>
            <person name="Jansa S.A."/>
            <person name="Goodman S.M."/>
            <person name="Tucker P.K."/>
        </authorList>
    </citation>
    <scope>NUCLEOTIDE SEQUENCE [GENOMIC DNA]</scope>
    <source>
        <strain>Isolate Eweb454</strain>
        <strain>Isolate Eweb456</strain>
        <strain>Isolate Eweb652</strain>
    </source>
</reference>
<dbReference type="EMBL" id="AF160521">
    <property type="protein sequence ID" value="AAF15137.1"/>
    <property type="molecule type" value="Genomic_DNA"/>
</dbReference>
<dbReference type="EMBL" id="AF160522">
    <property type="protein sequence ID" value="AAF15138.1"/>
    <property type="molecule type" value="Genomic_DNA"/>
</dbReference>
<dbReference type="EMBL" id="AF160526">
    <property type="protein sequence ID" value="AAF15142.1"/>
    <property type="molecule type" value="Genomic_DNA"/>
</dbReference>
<dbReference type="SMR" id="Q9T443"/>
<dbReference type="GO" id="GO:0005743">
    <property type="term" value="C:mitochondrial inner membrane"/>
    <property type="evidence" value="ECO:0007669"/>
    <property type="project" value="UniProtKB-SubCell"/>
</dbReference>
<dbReference type="GO" id="GO:0045275">
    <property type="term" value="C:respiratory chain complex III"/>
    <property type="evidence" value="ECO:0007669"/>
    <property type="project" value="InterPro"/>
</dbReference>
<dbReference type="GO" id="GO:0046872">
    <property type="term" value="F:metal ion binding"/>
    <property type="evidence" value="ECO:0007669"/>
    <property type="project" value="UniProtKB-KW"/>
</dbReference>
<dbReference type="GO" id="GO:0008121">
    <property type="term" value="F:ubiquinol-cytochrome-c reductase activity"/>
    <property type="evidence" value="ECO:0007669"/>
    <property type="project" value="InterPro"/>
</dbReference>
<dbReference type="GO" id="GO:0006122">
    <property type="term" value="P:mitochondrial electron transport, ubiquinol to cytochrome c"/>
    <property type="evidence" value="ECO:0007669"/>
    <property type="project" value="TreeGrafter"/>
</dbReference>
<dbReference type="CDD" id="cd00290">
    <property type="entry name" value="cytochrome_b_C"/>
    <property type="match status" value="1"/>
</dbReference>
<dbReference type="CDD" id="cd00284">
    <property type="entry name" value="Cytochrome_b_N"/>
    <property type="match status" value="1"/>
</dbReference>
<dbReference type="FunFam" id="1.20.810.10:FF:000002">
    <property type="entry name" value="Cytochrome b"/>
    <property type="match status" value="1"/>
</dbReference>
<dbReference type="Gene3D" id="1.20.810.10">
    <property type="entry name" value="Cytochrome Bc1 Complex, Chain C"/>
    <property type="match status" value="1"/>
</dbReference>
<dbReference type="InterPro" id="IPR005798">
    <property type="entry name" value="Cyt_b/b6_C"/>
</dbReference>
<dbReference type="InterPro" id="IPR036150">
    <property type="entry name" value="Cyt_b/b6_C_sf"/>
</dbReference>
<dbReference type="InterPro" id="IPR005797">
    <property type="entry name" value="Cyt_b/b6_N"/>
</dbReference>
<dbReference type="InterPro" id="IPR027387">
    <property type="entry name" value="Cytb/b6-like_sf"/>
</dbReference>
<dbReference type="InterPro" id="IPR030689">
    <property type="entry name" value="Cytochrome_b"/>
</dbReference>
<dbReference type="InterPro" id="IPR048260">
    <property type="entry name" value="Cytochrome_b_C_euk/bac"/>
</dbReference>
<dbReference type="InterPro" id="IPR048259">
    <property type="entry name" value="Cytochrome_b_N_euk/bac"/>
</dbReference>
<dbReference type="InterPro" id="IPR016174">
    <property type="entry name" value="Di-haem_cyt_TM"/>
</dbReference>
<dbReference type="PANTHER" id="PTHR19271">
    <property type="entry name" value="CYTOCHROME B"/>
    <property type="match status" value="1"/>
</dbReference>
<dbReference type="PANTHER" id="PTHR19271:SF16">
    <property type="entry name" value="CYTOCHROME B"/>
    <property type="match status" value="1"/>
</dbReference>
<dbReference type="Pfam" id="PF00032">
    <property type="entry name" value="Cytochrom_B_C"/>
    <property type="match status" value="1"/>
</dbReference>
<dbReference type="Pfam" id="PF00033">
    <property type="entry name" value="Cytochrome_B"/>
    <property type="match status" value="1"/>
</dbReference>
<dbReference type="PIRSF" id="PIRSF038885">
    <property type="entry name" value="COB"/>
    <property type="match status" value="1"/>
</dbReference>
<dbReference type="SUPFAM" id="SSF81648">
    <property type="entry name" value="a domain/subunit of cytochrome bc1 complex (Ubiquinol-cytochrome c reductase)"/>
    <property type="match status" value="1"/>
</dbReference>
<dbReference type="SUPFAM" id="SSF81342">
    <property type="entry name" value="Transmembrane di-heme cytochromes"/>
    <property type="match status" value="1"/>
</dbReference>
<dbReference type="PROSITE" id="PS51003">
    <property type="entry name" value="CYTB_CTER"/>
    <property type="match status" value="1"/>
</dbReference>
<dbReference type="PROSITE" id="PS51002">
    <property type="entry name" value="CYTB_NTER"/>
    <property type="match status" value="1"/>
</dbReference>
<feature type="chain" id="PRO_0000060917" description="Cytochrome b">
    <location>
        <begin position="1"/>
        <end position="380"/>
    </location>
</feature>
<feature type="transmembrane region" description="Helical" evidence="2">
    <location>
        <begin position="33"/>
        <end position="53"/>
    </location>
</feature>
<feature type="transmembrane region" description="Helical" evidence="2">
    <location>
        <begin position="77"/>
        <end position="98"/>
    </location>
</feature>
<feature type="transmembrane region" description="Helical" evidence="2">
    <location>
        <begin position="113"/>
        <end position="133"/>
    </location>
</feature>
<feature type="transmembrane region" description="Helical" evidence="2">
    <location>
        <begin position="178"/>
        <end position="198"/>
    </location>
</feature>
<feature type="transmembrane region" description="Helical" evidence="2">
    <location>
        <begin position="226"/>
        <end position="246"/>
    </location>
</feature>
<feature type="transmembrane region" description="Helical" evidence="2">
    <location>
        <begin position="288"/>
        <end position="308"/>
    </location>
</feature>
<feature type="transmembrane region" description="Helical" evidence="2">
    <location>
        <begin position="320"/>
        <end position="340"/>
    </location>
</feature>
<feature type="transmembrane region" description="Helical" evidence="2">
    <location>
        <begin position="347"/>
        <end position="367"/>
    </location>
</feature>
<feature type="binding site" description="axial binding residue" evidence="2">
    <location>
        <position position="83"/>
    </location>
    <ligand>
        <name>heme b</name>
        <dbReference type="ChEBI" id="CHEBI:60344"/>
        <label>b562</label>
    </ligand>
    <ligandPart>
        <name>Fe</name>
        <dbReference type="ChEBI" id="CHEBI:18248"/>
    </ligandPart>
</feature>
<feature type="binding site" description="axial binding residue" evidence="2">
    <location>
        <position position="97"/>
    </location>
    <ligand>
        <name>heme b</name>
        <dbReference type="ChEBI" id="CHEBI:60344"/>
        <label>b566</label>
    </ligand>
    <ligandPart>
        <name>Fe</name>
        <dbReference type="ChEBI" id="CHEBI:18248"/>
    </ligandPart>
</feature>
<feature type="binding site" description="axial binding residue" evidence="2">
    <location>
        <position position="182"/>
    </location>
    <ligand>
        <name>heme b</name>
        <dbReference type="ChEBI" id="CHEBI:60344"/>
        <label>b562</label>
    </ligand>
    <ligandPart>
        <name>Fe</name>
        <dbReference type="ChEBI" id="CHEBI:18248"/>
    </ligandPart>
</feature>
<feature type="binding site" description="axial binding residue" evidence="2">
    <location>
        <position position="196"/>
    </location>
    <ligand>
        <name>heme b</name>
        <dbReference type="ChEBI" id="CHEBI:60344"/>
        <label>b566</label>
    </ligand>
    <ligandPart>
        <name>Fe</name>
        <dbReference type="ChEBI" id="CHEBI:18248"/>
    </ligandPart>
</feature>
<feature type="binding site" evidence="2">
    <location>
        <position position="201"/>
    </location>
    <ligand>
        <name>a ubiquinone</name>
        <dbReference type="ChEBI" id="CHEBI:16389"/>
    </ligand>
</feature>
<feature type="sequence variant" description="In strain: Isolate Eweb652.">
    <original>I</original>
    <variation>V</variation>
    <location>
        <position position="39"/>
    </location>
</feature>
<feature type="sequence variant" description="In strain: Isolate Eweb652.">
    <original>S</original>
    <variation>T</variation>
    <location>
        <position position="203"/>
    </location>
</feature>
<feature type="sequence variant" description="In strain: Isolate Eweb652.">
    <original>L</original>
    <variation>F</variation>
    <location>
        <position position="236"/>
    </location>
</feature>
<feature type="sequence variant" description="In strain: Isolate Eweb652.">
    <original>L</original>
    <variation>F</variation>
    <location>
        <position position="249"/>
    </location>
</feature>
<feature type="sequence variant" description="In strain: Isolate Eweb652.">
    <original>T</original>
    <variation>A</variation>
    <location>
        <position position="334"/>
    </location>
</feature>
<keyword id="KW-0249">Electron transport</keyword>
<keyword id="KW-0349">Heme</keyword>
<keyword id="KW-0408">Iron</keyword>
<keyword id="KW-0472">Membrane</keyword>
<keyword id="KW-0479">Metal-binding</keyword>
<keyword id="KW-0496">Mitochondrion</keyword>
<keyword id="KW-0999">Mitochondrion inner membrane</keyword>
<keyword id="KW-0679">Respiratory chain</keyword>
<keyword id="KW-0812">Transmembrane</keyword>
<keyword id="KW-1133">Transmembrane helix</keyword>
<keyword id="KW-0813">Transport</keyword>
<keyword id="KW-0830">Ubiquinone</keyword>
<gene>
    <name type="primary">MT-CYB</name>
    <name type="synonym">COB</name>
    <name type="synonym">CYTB</name>
    <name type="synonym">MTCYB</name>
</gene>
<comment type="function">
    <text evidence="2">Component of the ubiquinol-cytochrome c reductase complex (complex III or cytochrome b-c1 complex) that is part of the mitochondrial respiratory chain. The b-c1 complex mediates electron transfer from ubiquinol to cytochrome c. Contributes to the generation of a proton gradient across the mitochondrial membrane that is then used for ATP synthesis.</text>
</comment>
<comment type="cofactor">
    <cofactor evidence="2">
        <name>heme b</name>
        <dbReference type="ChEBI" id="CHEBI:60344"/>
    </cofactor>
    <text evidence="2">Binds 2 heme b groups non-covalently.</text>
</comment>
<comment type="subunit">
    <text evidence="2">The cytochrome bc1 complex contains 11 subunits: 3 respiratory subunits (MT-CYB, CYC1 and UQCRFS1), 2 core proteins (UQCRC1 and UQCRC2) and 6 low-molecular weight proteins (UQCRH/QCR6, UQCRB/QCR7, UQCRQ/QCR8, UQCR10/QCR9, UQCR11/QCR10 and a cleavage product of UQCRFS1). This cytochrome bc1 complex then forms a dimer.</text>
</comment>
<comment type="subcellular location">
    <subcellularLocation>
        <location evidence="2">Mitochondrion inner membrane</location>
        <topology evidence="2">Multi-pass membrane protein</topology>
    </subcellularLocation>
</comment>
<comment type="miscellaneous">
    <text evidence="1">Heme 1 (or BL or b562) is low-potential and absorbs at about 562 nm, and heme 2 (or BH or b566) is high-potential and absorbs at about 566 nm.</text>
</comment>
<comment type="similarity">
    <text evidence="3 4">Belongs to the cytochrome b family.</text>
</comment>
<comment type="caution">
    <text evidence="2">The full-length protein contains only eight transmembrane helices, not nine as predicted by bioinformatics tools.</text>
</comment>
<name>CYB_ELIWE</name>
<accession>Q9T443</accession>
<accession>Q9T7T4</accession>
<organism>
    <name type="scientific">Eliurus webbi</name>
    <name type="common">Webb's tufted-tailed rat</name>
    <dbReference type="NCBI Taxonomy" id="107287"/>
    <lineage>
        <taxon>Eukaryota</taxon>
        <taxon>Metazoa</taxon>
        <taxon>Chordata</taxon>
        <taxon>Craniata</taxon>
        <taxon>Vertebrata</taxon>
        <taxon>Euteleostomi</taxon>
        <taxon>Mammalia</taxon>
        <taxon>Eutheria</taxon>
        <taxon>Euarchontoglires</taxon>
        <taxon>Glires</taxon>
        <taxon>Rodentia</taxon>
        <taxon>Myomorpha</taxon>
        <taxon>Muroidea</taxon>
        <taxon>Nesomyidae</taxon>
        <taxon>Nesomyinae</taxon>
        <taxon>Eliurus</taxon>
    </lineage>
</organism>
<sequence>MTNIRKSHPLLKIINHSFIDLPTPSNISSWWNFGSLLGICLILQIATGLFLAMHYTSDTTTAFSSVTHICRDVNYGWLIRYLHANGASMFFICLFIHVGRGMYYGSYMSIETWNMGIILLFAVMATAFMGYVLPWGQMSFWGATVITNLLSAIPYIGTTLVEWIWGGFSVDKATLTRFFAFHFILPFIIVALVMVHLLFLHESGSNNPSGLNSDADKIPFHPYYTIKDILGVLLLLLFLISLVLFAPDLLGDPDNYTPANPLNTPPHIKPEWYFLFAYAILRSIPNKLGGVLALILSILVLALLPHLHTSKLQSLMFRPLTQALYWILVADLLTLTWIGGQPVEYPFIIIGQLASILYFAIILIFMPMAGMIEDNMLKMN</sequence>
<evidence type="ECO:0000250" key="1"/>
<evidence type="ECO:0000250" key="2">
    <source>
        <dbReference type="UniProtKB" id="P00157"/>
    </source>
</evidence>
<evidence type="ECO:0000255" key="3">
    <source>
        <dbReference type="PROSITE-ProRule" id="PRU00967"/>
    </source>
</evidence>
<evidence type="ECO:0000255" key="4">
    <source>
        <dbReference type="PROSITE-ProRule" id="PRU00968"/>
    </source>
</evidence>
<proteinExistence type="inferred from homology"/>